<name>TRMA_SALSV</name>
<protein>
    <recommendedName>
        <fullName evidence="1">tRNA/tmRNA (uracil-C(5))-methyltransferase</fullName>
        <ecNumber evidence="1">2.1.1.-</ecNumber>
        <ecNumber evidence="1">2.1.1.35</ecNumber>
    </recommendedName>
    <alternativeName>
        <fullName evidence="1">tRNA (uracil(54)-C(5))-methyltransferase</fullName>
    </alternativeName>
    <alternativeName>
        <fullName evidence="1">tRNA(m5U54)-methyltransferase</fullName>
        <shortName evidence="1">RUMT</shortName>
    </alternativeName>
    <alternativeName>
        <fullName evidence="1">tmRNA (uracil(341)-C(5))-methyltransferase</fullName>
    </alternativeName>
</protein>
<dbReference type="EC" id="2.1.1.-" evidence="1"/>
<dbReference type="EC" id="2.1.1.35" evidence="1"/>
<dbReference type="EMBL" id="CP001127">
    <property type="protein sequence ID" value="ACF91799.1"/>
    <property type="molecule type" value="Genomic_DNA"/>
</dbReference>
<dbReference type="RefSeq" id="WP_000186979.1">
    <property type="nucleotide sequence ID" value="NC_011094.1"/>
</dbReference>
<dbReference type="SMR" id="B4TQI0"/>
<dbReference type="KEGG" id="sew:SeSA_A4339"/>
<dbReference type="HOGENOM" id="CLU_043022_0_0_6"/>
<dbReference type="Proteomes" id="UP000001865">
    <property type="component" value="Chromosome"/>
</dbReference>
<dbReference type="GO" id="GO:0005829">
    <property type="term" value="C:cytosol"/>
    <property type="evidence" value="ECO:0007669"/>
    <property type="project" value="TreeGrafter"/>
</dbReference>
<dbReference type="GO" id="GO:0019843">
    <property type="term" value="F:rRNA binding"/>
    <property type="evidence" value="ECO:0007669"/>
    <property type="project" value="TreeGrafter"/>
</dbReference>
<dbReference type="GO" id="GO:0030697">
    <property type="term" value="F:tRNA (uracil(54)-C5)-methyltransferase activity, S-adenosyl methionine-dependent"/>
    <property type="evidence" value="ECO:0007669"/>
    <property type="project" value="UniProtKB-UniRule"/>
</dbReference>
<dbReference type="GO" id="GO:0000049">
    <property type="term" value="F:tRNA binding"/>
    <property type="evidence" value="ECO:0007669"/>
    <property type="project" value="TreeGrafter"/>
</dbReference>
<dbReference type="GO" id="GO:0030488">
    <property type="term" value="P:tRNA methylation"/>
    <property type="evidence" value="ECO:0007669"/>
    <property type="project" value="UniProtKB-UniRule"/>
</dbReference>
<dbReference type="CDD" id="cd02440">
    <property type="entry name" value="AdoMet_MTases"/>
    <property type="match status" value="1"/>
</dbReference>
<dbReference type="FunFam" id="2.40.50.1070:FF:000001">
    <property type="entry name" value="tRNA/tmRNA (uracil-C(5))-methyltransferase"/>
    <property type="match status" value="1"/>
</dbReference>
<dbReference type="FunFam" id="3.40.50.150:FF:000012">
    <property type="entry name" value="tRNA/tmRNA (uracil-C(5))-methyltransferase"/>
    <property type="match status" value="1"/>
</dbReference>
<dbReference type="Gene3D" id="2.40.50.1070">
    <property type="match status" value="1"/>
</dbReference>
<dbReference type="Gene3D" id="3.40.50.150">
    <property type="entry name" value="Vaccinia Virus protein VP39"/>
    <property type="match status" value="1"/>
</dbReference>
<dbReference type="HAMAP" id="MF_01011">
    <property type="entry name" value="RNA_methyltr_TrmA"/>
    <property type="match status" value="1"/>
</dbReference>
<dbReference type="InterPro" id="IPR030390">
    <property type="entry name" value="MeTrfase_TrmA_AS"/>
</dbReference>
<dbReference type="InterPro" id="IPR030391">
    <property type="entry name" value="MeTrfase_TrmA_CS"/>
</dbReference>
<dbReference type="InterPro" id="IPR029063">
    <property type="entry name" value="SAM-dependent_MTases_sf"/>
</dbReference>
<dbReference type="InterPro" id="IPR011869">
    <property type="entry name" value="TrmA_MeTrfase"/>
</dbReference>
<dbReference type="InterPro" id="IPR010280">
    <property type="entry name" value="U5_MeTrfase_fam"/>
</dbReference>
<dbReference type="NCBIfam" id="TIGR02143">
    <property type="entry name" value="trmA_only"/>
    <property type="match status" value="1"/>
</dbReference>
<dbReference type="PANTHER" id="PTHR47790">
    <property type="entry name" value="TRNA/TMRNA (URACIL-C(5))-METHYLTRANSFERASE"/>
    <property type="match status" value="1"/>
</dbReference>
<dbReference type="PANTHER" id="PTHR47790:SF2">
    <property type="entry name" value="TRNA_TMRNA (URACIL-C(5))-METHYLTRANSFERASE"/>
    <property type="match status" value="1"/>
</dbReference>
<dbReference type="Pfam" id="PF05958">
    <property type="entry name" value="tRNA_U5-meth_tr"/>
    <property type="match status" value="1"/>
</dbReference>
<dbReference type="SUPFAM" id="SSF53335">
    <property type="entry name" value="S-adenosyl-L-methionine-dependent methyltransferases"/>
    <property type="match status" value="1"/>
</dbReference>
<dbReference type="PROSITE" id="PS51687">
    <property type="entry name" value="SAM_MT_RNA_M5U"/>
    <property type="match status" value="1"/>
</dbReference>
<dbReference type="PROSITE" id="PS01230">
    <property type="entry name" value="TRMA_1"/>
    <property type="match status" value="1"/>
</dbReference>
<dbReference type="PROSITE" id="PS01231">
    <property type="entry name" value="TRMA_2"/>
    <property type="match status" value="1"/>
</dbReference>
<reference key="1">
    <citation type="journal article" date="2011" name="J. Bacteriol.">
        <title>Comparative genomics of 28 Salmonella enterica isolates: evidence for CRISPR-mediated adaptive sublineage evolution.</title>
        <authorList>
            <person name="Fricke W.F."/>
            <person name="Mammel M.K."/>
            <person name="McDermott P.F."/>
            <person name="Tartera C."/>
            <person name="White D.G."/>
            <person name="Leclerc J.E."/>
            <person name="Ravel J."/>
            <person name="Cebula T.A."/>
        </authorList>
    </citation>
    <scope>NUCLEOTIDE SEQUENCE [LARGE SCALE GENOMIC DNA]</scope>
    <source>
        <strain>CVM19633</strain>
    </source>
</reference>
<keyword id="KW-0489">Methyltransferase</keyword>
<keyword id="KW-0949">S-adenosyl-L-methionine</keyword>
<keyword id="KW-0808">Transferase</keyword>
<keyword id="KW-0819">tRNA processing</keyword>
<organism>
    <name type="scientific">Salmonella schwarzengrund (strain CVM19633)</name>
    <dbReference type="NCBI Taxonomy" id="439843"/>
    <lineage>
        <taxon>Bacteria</taxon>
        <taxon>Pseudomonadati</taxon>
        <taxon>Pseudomonadota</taxon>
        <taxon>Gammaproteobacteria</taxon>
        <taxon>Enterobacterales</taxon>
        <taxon>Enterobacteriaceae</taxon>
        <taxon>Salmonella</taxon>
    </lineage>
</organism>
<feature type="chain" id="PRO_1000198557" description="tRNA/tmRNA (uracil-C(5))-methyltransferase">
    <location>
        <begin position="1"/>
        <end position="366"/>
    </location>
</feature>
<feature type="active site" description="Nucleophile" evidence="1">
    <location>
        <position position="324"/>
    </location>
</feature>
<feature type="active site" description="Proton acceptor" evidence="1">
    <location>
        <position position="358"/>
    </location>
</feature>
<feature type="binding site" evidence="1">
    <location>
        <position position="190"/>
    </location>
    <ligand>
        <name>S-adenosyl-L-methionine</name>
        <dbReference type="ChEBI" id="CHEBI:59789"/>
    </ligand>
</feature>
<feature type="binding site" evidence="1">
    <location>
        <position position="218"/>
    </location>
    <ligand>
        <name>S-adenosyl-L-methionine</name>
        <dbReference type="ChEBI" id="CHEBI:59789"/>
    </ligand>
</feature>
<feature type="binding site" evidence="1">
    <location>
        <position position="223"/>
    </location>
    <ligand>
        <name>S-adenosyl-L-methionine</name>
        <dbReference type="ChEBI" id="CHEBI:59789"/>
    </ligand>
</feature>
<feature type="binding site" evidence="1">
    <location>
        <position position="239"/>
    </location>
    <ligand>
        <name>S-adenosyl-L-methionine</name>
        <dbReference type="ChEBI" id="CHEBI:59789"/>
    </ligand>
</feature>
<feature type="binding site" evidence="1">
    <location>
        <position position="299"/>
    </location>
    <ligand>
        <name>S-adenosyl-L-methionine</name>
        <dbReference type="ChEBI" id="CHEBI:59789"/>
    </ligand>
</feature>
<proteinExistence type="inferred from homology"/>
<comment type="function">
    <text evidence="1">Dual-specificity methyltransferase that catalyzes the formation of 5-methyluridine at position 54 (m5U54) in all tRNAs, and that of position 341 (m5U341) in tmRNA (transfer-mRNA).</text>
</comment>
<comment type="catalytic activity">
    <reaction evidence="1">
        <text>uridine(54) in tRNA + S-adenosyl-L-methionine = 5-methyluridine(54) in tRNA + S-adenosyl-L-homocysteine + H(+)</text>
        <dbReference type="Rhea" id="RHEA:42712"/>
        <dbReference type="Rhea" id="RHEA-COMP:10167"/>
        <dbReference type="Rhea" id="RHEA-COMP:10193"/>
        <dbReference type="ChEBI" id="CHEBI:15378"/>
        <dbReference type="ChEBI" id="CHEBI:57856"/>
        <dbReference type="ChEBI" id="CHEBI:59789"/>
        <dbReference type="ChEBI" id="CHEBI:65315"/>
        <dbReference type="ChEBI" id="CHEBI:74447"/>
        <dbReference type="EC" id="2.1.1.35"/>
    </reaction>
</comment>
<comment type="catalytic activity">
    <reaction evidence="1">
        <text>uridine(341) in tmRNA + S-adenosyl-L-methionine = 5-methyluridine(341) in tmRNA + S-adenosyl-L-homocysteine + H(+)</text>
        <dbReference type="Rhea" id="RHEA:43612"/>
        <dbReference type="Rhea" id="RHEA-COMP:10630"/>
        <dbReference type="Rhea" id="RHEA-COMP:10631"/>
        <dbReference type="ChEBI" id="CHEBI:15378"/>
        <dbReference type="ChEBI" id="CHEBI:57856"/>
        <dbReference type="ChEBI" id="CHEBI:59789"/>
        <dbReference type="ChEBI" id="CHEBI:65315"/>
        <dbReference type="ChEBI" id="CHEBI:74447"/>
    </reaction>
</comment>
<comment type="similarity">
    <text evidence="1">Belongs to the class I-like SAM-binding methyltransferase superfamily. RNA M5U methyltransferase family. TrmA subfamily.</text>
</comment>
<evidence type="ECO:0000255" key="1">
    <source>
        <dbReference type="HAMAP-Rule" id="MF_01011"/>
    </source>
</evidence>
<accession>B4TQI0</accession>
<gene>
    <name evidence="1" type="primary">trmA</name>
    <name type="ordered locus">SeSA_A4339</name>
</gene>
<sequence>MTPEHLPTEQYEAQLAEKVARLQSMMAPFSGLVPEVFRSPVSHYRMRAEFRLWHDGDDLYHIMFDQQTKSRIRVDTFPAASQLINTLMKAMIAGVRDNHALRHKLFQIDYLTTLSNQAVVSLLYHKKLDEEWREAATALRDALRAQGLNVHLIGRATKTKIELDQDYIDERLPVAGKEMIYRQVENSFTQPNAAMNIQMLEWALEVTKDSKGDLLELYCGNGNFSLALARNFDRVLATEIAKPSVAAAQYNIAANHIDNVQIIRMAAEEFTQAMNGVREFNRLQGIDLKRYQCETIFVDPPRSGLDSETEKMVQAYPRILYISCNPETLCKNLETLSQTHTVSRLALFDQFPYTHHMECGVLLTAR</sequence>